<sequence length="146" mass="16722">MMDIKEIREYLPHRYPFLLVDRVTELDIENKNIRAYKNVSVNEPFFNGHFPEHPIMPGVLIIEAMAQAAGILAFKMLDSKPSDGTLYYFVGSDKLRFRQPVLPGDQLVLEAKFLSSKRQIWKFECKATVDGKAVCSAEIICAERKL</sequence>
<feature type="chain" id="PRO_0000230827" description="3-hydroxyacyl-[acyl-carrier-protein] dehydratase FabZ">
    <location>
        <begin position="1"/>
        <end position="146"/>
    </location>
</feature>
<feature type="active site" evidence="1">
    <location>
        <position position="49"/>
    </location>
</feature>
<proteinExistence type="inferred from homology"/>
<accession>Q48F70</accession>
<protein>
    <recommendedName>
        <fullName evidence="1">3-hydroxyacyl-[acyl-carrier-protein] dehydratase FabZ</fullName>
        <ecNumber evidence="1">4.2.1.59</ecNumber>
    </recommendedName>
    <alternativeName>
        <fullName evidence="1">(3R)-hydroxymyristoyl-[acyl-carrier-protein] dehydratase</fullName>
        <shortName evidence="1">(3R)-hydroxymyristoyl-ACP dehydrase</shortName>
    </alternativeName>
    <alternativeName>
        <fullName evidence="1">Beta-hydroxyacyl-ACP dehydratase</fullName>
    </alternativeName>
</protein>
<name>FABZ_PSE14</name>
<organism>
    <name type="scientific">Pseudomonas savastanoi pv. phaseolicola (strain 1448A / Race 6)</name>
    <name type="common">Pseudomonas syringae pv. phaseolicola (strain 1448A / Race 6)</name>
    <dbReference type="NCBI Taxonomy" id="264730"/>
    <lineage>
        <taxon>Bacteria</taxon>
        <taxon>Pseudomonadati</taxon>
        <taxon>Pseudomonadota</taxon>
        <taxon>Gammaproteobacteria</taxon>
        <taxon>Pseudomonadales</taxon>
        <taxon>Pseudomonadaceae</taxon>
        <taxon>Pseudomonas</taxon>
    </lineage>
</organism>
<evidence type="ECO:0000255" key="1">
    <source>
        <dbReference type="HAMAP-Rule" id="MF_00406"/>
    </source>
</evidence>
<gene>
    <name evidence="1" type="primary">fabZ</name>
    <name type="ordered locus">PSPPH_3829</name>
</gene>
<dbReference type="EC" id="4.2.1.59" evidence="1"/>
<dbReference type="EMBL" id="CP000058">
    <property type="protein sequence ID" value="AAZ35073.1"/>
    <property type="molecule type" value="Genomic_DNA"/>
</dbReference>
<dbReference type="RefSeq" id="WP_002554719.1">
    <property type="nucleotide sequence ID" value="NC_005773.3"/>
</dbReference>
<dbReference type="SMR" id="Q48F70"/>
<dbReference type="GeneID" id="77277310"/>
<dbReference type="KEGG" id="psp:PSPPH_3829"/>
<dbReference type="eggNOG" id="COG0764">
    <property type="taxonomic scope" value="Bacteria"/>
</dbReference>
<dbReference type="HOGENOM" id="CLU_078912_1_2_6"/>
<dbReference type="Proteomes" id="UP000000551">
    <property type="component" value="Chromosome"/>
</dbReference>
<dbReference type="GO" id="GO:0005737">
    <property type="term" value="C:cytoplasm"/>
    <property type="evidence" value="ECO:0007669"/>
    <property type="project" value="UniProtKB-SubCell"/>
</dbReference>
<dbReference type="GO" id="GO:0016020">
    <property type="term" value="C:membrane"/>
    <property type="evidence" value="ECO:0007669"/>
    <property type="project" value="GOC"/>
</dbReference>
<dbReference type="GO" id="GO:0019171">
    <property type="term" value="F:(3R)-hydroxyacyl-[acyl-carrier-protein] dehydratase activity"/>
    <property type="evidence" value="ECO:0007669"/>
    <property type="project" value="UniProtKB-EC"/>
</dbReference>
<dbReference type="GO" id="GO:0006633">
    <property type="term" value="P:fatty acid biosynthetic process"/>
    <property type="evidence" value="ECO:0007669"/>
    <property type="project" value="UniProtKB-UniRule"/>
</dbReference>
<dbReference type="GO" id="GO:0009245">
    <property type="term" value="P:lipid A biosynthetic process"/>
    <property type="evidence" value="ECO:0007669"/>
    <property type="project" value="UniProtKB-UniRule"/>
</dbReference>
<dbReference type="CDD" id="cd01288">
    <property type="entry name" value="FabZ"/>
    <property type="match status" value="1"/>
</dbReference>
<dbReference type="FunFam" id="3.10.129.10:FF:000001">
    <property type="entry name" value="3-hydroxyacyl-[acyl-carrier-protein] dehydratase FabZ"/>
    <property type="match status" value="1"/>
</dbReference>
<dbReference type="Gene3D" id="3.10.129.10">
    <property type="entry name" value="Hotdog Thioesterase"/>
    <property type="match status" value="1"/>
</dbReference>
<dbReference type="HAMAP" id="MF_00406">
    <property type="entry name" value="FabZ"/>
    <property type="match status" value="1"/>
</dbReference>
<dbReference type="InterPro" id="IPR013114">
    <property type="entry name" value="FabA_FabZ"/>
</dbReference>
<dbReference type="InterPro" id="IPR010084">
    <property type="entry name" value="FabZ"/>
</dbReference>
<dbReference type="InterPro" id="IPR029069">
    <property type="entry name" value="HotDog_dom_sf"/>
</dbReference>
<dbReference type="NCBIfam" id="TIGR01750">
    <property type="entry name" value="fabZ"/>
    <property type="match status" value="1"/>
</dbReference>
<dbReference type="NCBIfam" id="NF000582">
    <property type="entry name" value="PRK00006.1"/>
    <property type="match status" value="1"/>
</dbReference>
<dbReference type="PANTHER" id="PTHR30272">
    <property type="entry name" value="3-HYDROXYACYL-[ACYL-CARRIER-PROTEIN] DEHYDRATASE"/>
    <property type="match status" value="1"/>
</dbReference>
<dbReference type="PANTHER" id="PTHR30272:SF1">
    <property type="entry name" value="3-HYDROXYACYL-[ACYL-CARRIER-PROTEIN] DEHYDRATASE"/>
    <property type="match status" value="1"/>
</dbReference>
<dbReference type="Pfam" id="PF07977">
    <property type="entry name" value="FabA"/>
    <property type="match status" value="1"/>
</dbReference>
<dbReference type="SUPFAM" id="SSF54637">
    <property type="entry name" value="Thioesterase/thiol ester dehydrase-isomerase"/>
    <property type="match status" value="1"/>
</dbReference>
<reference key="1">
    <citation type="journal article" date="2005" name="J. Bacteriol.">
        <title>Whole-genome sequence analysis of Pseudomonas syringae pv. phaseolicola 1448A reveals divergence among pathovars in genes involved in virulence and transposition.</title>
        <authorList>
            <person name="Joardar V."/>
            <person name="Lindeberg M."/>
            <person name="Jackson R.W."/>
            <person name="Selengut J."/>
            <person name="Dodson R."/>
            <person name="Brinkac L.M."/>
            <person name="Daugherty S.C."/>
            <person name="DeBoy R.T."/>
            <person name="Durkin A.S."/>
            <person name="Gwinn Giglio M."/>
            <person name="Madupu R."/>
            <person name="Nelson W.C."/>
            <person name="Rosovitz M.J."/>
            <person name="Sullivan S.A."/>
            <person name="Crabtree J."/>
            <person name="Creasy T."/>
            <person name="Davidsen T.M."/>
            <person name="Haft D.H."/>
            <person name="Zafar N."/>
            <person name="Zhou L."/>
            <person name="Halpin R."/>
            <person name="Holley T."/>
            <person name="Khouri H.M."/>
            <person name="Feldblyum T.V."/>
            <person name="White O."/>
            <person name="Fraser C.M."/>
            <person name="Chatterjee A.K."/>
            <person name="Cartinhour S."/>
            <person name="Schneider D."/>
            <person name="Mansfield J.W."/>
            <person name="Collmer A."/>
            <person name="Buell R."/>
        </authorList>
    </citation>
    <scope>NUCLEOTIDE SEQUENCE [LARGE SCALE GENOMIC DNA]</scope>
    <source>
        <strain>1448A / Race 6</strain>
    </source>
</reference>
<keyword id="KW-0963">Cytoplasm</keyword>
<keyword id="KW-0441">Lipid A biosynthesis</keyword>
<keyword id="KW-0444">Lipid biosynthesis</keyword>
<keyword id="KW-0443">Lipid metabolism</keyword>
<keyword id="KW-0456">Lyase</keyword>
<comment type="function">
    <text evidence="1">Involved in unsaturated fatty acids biosynthesis. Catalyzes the dehydration of short chain beta-hydroxyacyl-ACPs and long chain saturated and unsaturated beta-hydroxyacyl-ACPs.</text>
</comment>
<comment type="catalytic activity">
    <reaction evidence="1">
        <text>a (3R)-hydroxyacyl-[ACP] = a (2E)-enoyl-[ACP] + H2O</text>
        <dbReference type="Rhea" id="RHEA:13097"/>
        <dbReference type="Rhea" id="RHEA-COMP:9925"/>
        <dbReference type="Rhea" id="RHEA-COMP:9945"/>
        <dbReference type="ChEBI" id="CHEBI:15377"/>
        <dbReference type="ChEBI" id="CHEBI:78784"/>
        <dbReference type="ChEBI" id="CHEBI:78827"/>
        <dbReference type="EC" id="4.2.1.59"/>
    </reaction>
</comment>
<comment type="subcellular location">
    <subcellularLocation>
        <location evidence="1">Cytoplasm</location>
    </subcellularLocation>
</comment>
<comment type="similarity">
    <text evidence="1">Belongs to the thioester dehydratase family. FabZ subfamily.</text>
</comment>